<keyword id="KW-0067">ATP-binding</keyword>
<keyword id="KW-0227">DNA damage</keyword>
<keyword id="KW-0234">DNA repair</keyword>
<keyword id="KW-0238">DNA-binding</keyword>
<keyword id="KW-0460">Magnesium</keyword>
<keyword id="KW-0547">Nucleotide-binding</keyword>
<keyword id="KW-0548">Nucleotidyltransferase</keyword>
<keyword id="KW-1185">Reference proteome</keyword>
<keyword id="KW-0808">Transferase</keyword>
<proteinExistence type="evidence at protein level"/>
<gene>
    <name evidence="2" type="primary">disA</name>
    <name type="ordered locus">SCO3352</name>
    <name type="ORF">SCE94.03</name>
</gene>
<reference key="1">
    <citation type="journal article" date="2002" name="Nature">
        <title>Complete genome sequence of the model actinomycete Streptomyces coelicolor A3(2).</title>
        <authorList>
            <person name="Bentley S.D."/>
            <person name="Chater K.F."/>
            <person name="Cerdeno-Tarraga A.-M."/>
            <person name="Challis G.L."/>
            <person name="Thomson N.R."/>
            <person name="James K.D."/>
            <person name="Harris D.E."/>
            <person name="Quail M.A."/>
            <person name="Kieser H."/>
            <person name="Harper D."/>
            <person name="Bateman A."/>
            <person name="Brown S."/>
            <person name="Chandra G."/>
            <person name="Chen C.W."/>
            <person name="Collins M."/>
            <person name="Cronin A."/>
            <person name="Fraser A."/>
            <person name="Goble A."/>
            <person name="Hidalgo J."/>
            <person name="Hornsby T."/>
            <person name="Howarth S."/>
            <person name="Huang C.-H."/>
            <person name="Kieser T."/>
            <person name="Larke L."/>
            <person name="Murphy L.D."/>
            <person name="Oliver K."/>
            <person name="O'Neil S."/>
            <person name="Rabbinowitsch E."/>
            <person name="Rajandream M.A."/>
            <person name="Rutherford K.M."/>
            <person name="Rutter S."/>
            <person name="Seeger K."/>
            <person name="Saunders D."/>
            <person name="Sharp S."/>
            <person name="Squares R."/>
            <person name="Squares S."/>
            <person name="Taylor K."/>
            <person name="Warren T."/>
            <person name="Wietzorrek A."/>
            <person name="Woodward J.R."/>
            <person name="Barrell B.G."/>
            <person name="Parkhill J."/>
            <person name="Hopwood D.A."/>
        </authorList>
    </citation>
    <scope>NUCLEOTIDE SEQUENCE [LARGE SCALE GENOMIC DNA]</scope>
    <source>
        <strain>ATCC BAA-471 / A3(2) / M145</strain>
    </source>
</reference>
<reference key="2">
    <citation type="journal article" date="2013" name="J. Biol. Chem.">
        <title>Radiation-sensitive gene A (RadA) targets DisA, DNA integrity scanning protein A, to negatively affect cyclic di-AMP synthesis activity in Mycobacterium smegmatis.</title>
        <authorList>
            <person name="Zhang L."/>
            <person name="He Z.G."/>
        </authorList>
    </citation>
    <scope>INTERACTION WITH RADA</scope>
</reference>
<evidence type="ECO:0000250" key="1"/>
<evidence type="ECO:0000255" key="2">
    <source>
        <dbReference type="HAMAP-Rule" id="MF_01438"/>
    </source>
</evidence>
<evidence type="ECO:0000255" key="3">
    <source>
        <dbReference type="PROSITE-ProRule" id="PRU01130"/>
    </source>
</evidence>
<evidence type="ECO:0000269" key="4">
    <source>
    </source>
</evidence>
<protein>
    <recommendedName>
        <fullName evidence="2">DNA integrity scanning protein DisA</fullName>
    </recommendedName>
    <alternativeName>
        <fullName evidence="2">Cyclic di-AMP synthase</fullName>
        <shortName evidence="2">c-di-AMP synthase</shortName>
    </alternativeName>
    <alternativeName>
        <fullName evidence="2">Diadenylate cyclase</fullName>
        <ecNumber evidence="2">2.7.7.85</ecNumber>
    </alternativeName>
</protein>
<dbReference type="EC" id="2.7.7.85" evidence="2"/>
<dbReference type="EMBL" id="AL939116">
    <property type="protein sequence ID" value="CAB40852.1"/>
    <property type="molecule type" value="Genomic_DNA"/>
</dbReference>
<dbReference type="PIR" id="T36363">
    <property type="entry name" value="T36363"/>
</dbReference>
<dbReference type="RefSeq" id="NP_627560.1">
    <property type="nucleotide sequence ID" value="NC_003888.3"/>
</dbReference>
<dbReference type="RefSeq" id="WP_003975482.1">
    <property type="nucleotide sequence ID" value="NZ_VNID01000023.1"/>
</dbReference>
<dbReference type="SMR" id="Q9X8L6"/>
<dbReference type="FunCoup" id="Q9X8L6">
    <property type="interactions" value="2"/>
</dbReference>
<dbReference type="STRING" id="100226.gene:17760974"/>
<dbReference type="PaxDb" id="100226-SCO3352"/>
<dbReference type="GeneID" id="96649820"/>
<dbReference type="KEGG" id="sco:SCO3352"/>
<dbReference type="PATRIC" id="fig|100226.15.peg.3415"/>
<dbReference type="eggNOG" id="COG1623">
    <property type="taxonomic scope" value="Bacteria"/>
</dbReference>
<dbReference type="HOGENOM" id="CLU_787128_0_0_11"/>
<dbReference type="InParanoid" id="Q9X8L6"/>
<dbReference type="OrthoDB" id="41841at2"/>
<dbReference type="PhylomeDB" id="Q9X8L6"/>
<dbReference type="Proteomes" id="UP000001973">
    <property type="component" value="Chromosome"/>
</dbReference>
<dbReference type="GO" id="GO:0004016">
    <property type="term" value="F:adenylate cyclase activity"/>
    <property type="evidence" value="ECO:0000318"/>
    <property type="project" value="GO_Central"/>
</dbReference>
<dbReference type="GO" id="GO:0005524">
    <property type="term" value="F:ATP binding"/>
    <property type="evidence" value="ECO:0007669"/>
    <property type="project" value="UniProtKB-UniRule"/>
</dbReference>
<dbReference type="GO" id="GO:0140097">
    <property type="term" value="F:catalytic activity, acting on DNA"/>
    <property type="evidence" value="ECO:0007669"/>
    <property type="project" value="UniProtKB-ARBA"/>
</dbReference>
<dbReference type="GO" id="GO:0106408">
    <property type="term" value="F:diadenylate cyclase activity"/>
    <property type="evidence" value="ECO:0007669"/>
    <property type="project" value="UniProtKB-EC"/>
</dbReference>
<dbReference type="GO" id="GO:0003677">
    <property type="term" value="F:DNA binding"/>
    <property type="evidence" value="ECO:0007669"/>
    <property type="project" value="UniProtKB-UniRule"/>
</dbReference>
<dbReference type="GO" id="GO:0016787">
    <property type="term" value="F:hydrolase activity"/>
    <property type="evidence" value="ECO:0007669"/>
    <property type="project" value="UniProtKB-ARBA"/>
</dbReference>
<dbReference type="GO" id="GO:0006281">
    <property type="term" value="P:DNA repair"/>
    <property type="evidence" value="ECO:0007669"/>
    <property type="project" value="UniProtKB-UniRule"/>
</dbReference>
<dbReference type="FunFam" id="1.10.150.20:FF:000016">
    <property type="entry name" value="DNA integrity scanning protein DisA"/>
    <property type="match status" value="1"/>
</dbReference>
<dbReference type="FunFam" id="1.20.1260.110:FF:000002">
    <property type="entry name" value="DNA integrity scanning protein DisA"/>
    <property type="match status" value="1"/>
</dbReference>
<dbReference type="FunFam" id="3.40.1700.10:FF:000001">
    <property type="entry name" value="DNA integrity scanning protein DisA"/>
    <property type="match status" value="1"/>
</dbReference>
<dbReference type="Gene3D" id="1.10.150.20">
    <property type="entry name" value="5' to 3' exonuclease, C-terminal subdomain"/>
    <property type="match status" value="1"/>
</dbReference>
<dbReference type="Gene3D" id="1.20.1260.110">
    <property type="entry name" value="DNA integrity scanning linker region"/>
    <property type="match status" value="1"/>
</dbReference>
<dbReference type="Gene3D" id="3.40.1700.10">
    <property type="entry name" value="DNA integrity scanning protein, DisA, N-terminal domain"/>
    <property type="match status" value="1"/>
</dbReference>
<dbReference type="HAMAP" id="MF_01438">
    <property type="entry name" value="DisA"/>
    <property type="match status" value="1"/>
</dbReference>
<dbReference type="InterPro" id="IPR050338">
    <property type="entry name" value="DisA"/>
</dbReference>
<dbReference type="InterPro" id="IPR038331">
    <property type="entry name" value="DisA_sf"/>
</dbReference>
<dbReference type="InterPro" id="IPR036888">
    <property type="entry name" value="DNA_integrity_DisA_N_sf"/>
</dbReference>
<dbReference type="InterPro" id="IPR018906">
    <property type="entry name" value="DNA_integrity_scan_DisA_link"/>
</dbReference>
<dbReference type="InterPro" id="IPR003390">
    <property type="entry name" value="DNA_integrity_scan_DisA_N"/>
</dbReference>
<dbReference type="InterPro" id="IPR023763">
    <property type="entry name" value="DNA_integrity_scanning_protein"/>
</dbReference>
<dbReference type="InterPro" id="IPR000445">
    <property type="entry name" value="HhH_motif"/>
</dbReference>
<dbReference type="InterPro" id="IPR010994">
    <property type="entry name" value="RuvA_2-like"/>
</dbReference>
<dbReference type="NCBIfam" id="NF010009">
    <property type="entry name" value="PRK13482.1"/>
    <property type="match status" value="1"/>
</dbReference>
<dbReference type="PANTHER" id="PTHR34185">
    <property type="entry name" value="DIADENYLATE CYCLASE"/>
    <property type="match status" value="1"/>
</dbReference>
<dbReference type="PANTHER" id="PTHR34185:SF3">
    <property type="entry name" value="DNA INTEGRITY SCANNING PROTEIN DISA"/>
    <property type="match status" value="1"/>
</dbReference>
<dbReference type="Pfam" id="PF02457">
    <property type="entry name" value="DAC"/>
    <property type="match status" value="1"/>
</dbReference>
<dbReference type="Pfam" id="PF10635">
    <property type="entry name" value="DisA-linker"/>
    <property type="match status" value="1"/>
</dbReference>
<dbReference type="Pfam" id="PF00633">
    <property type="entry name" value="HHH"/>
    <property type="match status" value="1"/>
</dbReference>
<dbReference type="SUPFAM" id="SSF47781">
    <property type="entry name" value="RuvA domain 2-like"/>
    <property type="match status" value="1"/>
</dbReference>
<dbReference type="SUPFAM" id="SSF143597">
    <property type="entry name" value="YojJ-like"/>
    <property type="match status" value="1"/>
</dbReference>
<dbReference type="PROSITE" id="PS51794">
    <property type="entry name" value="DAC"/>
    <property type="match status" value="1"/>
</dbReference>
<accession>Q9X8L6</accession>
<comment type="function">
    <text evidence="2">Participates in a DNA-damage check-point that is active prior to asymmetric division when DNA is damaged. DisA forms globular foci that rapidly scan along the chromosomes during sporulation, searching for lesions. When a lesion is present, DisA pauses at the lesion site. This triggers a cellular response that culminates in a temporary block in sporulation initiation.</text>
</comment>
<comment type="function">
    <text evidence="2">Also has diadenylate cyclase activity, catalyzing the condensation of 2 ATP molecules into cyclic di-AMP (c-di-AMP). c-di-AMP acts as a signaling molecule that couples DNA integrity with progression of sporulation. The rise in c-di-AMP level generated by DisA while scanning the chromosome, operates as a positive signal that advances sporulation; upon encountering a lesion, the DisA focus arrests at the damaged site and halts c-di-AMP synthesis.</text>
</comment>
<comment type="catalytic activity">
    <reaction evidence="2">
        <text>2 ATP = 3',3'-c-di-AMP + 2 diphosphate</text>
        <dbReference type="Rhea" id="RHEA:35655"/>
        <dbReference type="ChEBI" id="CHEBI:30616"/>
        <dbReference type="ChEBI" id="CHEBI:33019"/>
        <dbReference type="ChEBI" id="CHEBI:71500"/>
        <dbReference type="EC" id="2.7.7.85"/>
    </reaction>
</comment>
<comment type="cofactor">
    <cofactor evidence="2">
        <name>Mg(2+)</name>
        <dbReference type="ChEBI" id="CHEBI:18420"/>
    </cofactor>
</comment>
<comment type="activity regulation">
    <text evidence="1">Diadenylate cyclase activity is inhibited by the interaction with RadA.</text>
</comment>
<comment type="subunit">
    <text evidence="2 4">Homooctamer (By similarity). Interacts with RadA.</text>
</comment>
<comment type="similarity">
    <text evidence="2">Belongs to the DisA family.</text>
</comment>
<name>DISA_STRCO</name>
<organism>
    <name type="scientific">Streptomyces coelicolor (strain ATCC BAA-471 / A3(2) / M145)</name>
    <dbReference type="NCBI Taxonomy" id="100226"/>
    <lineage>
        <taxon>Bacteria</taxon>
        <taxon>Bacillati</taxon>
        <taxon>Actinomycetota</taxon>
        <taxon>Actinomycetes</taxon>
        <taxon>Kitasatosporales</taxon>
        <taxon>Streptomycetaceae</taxon>
        <taxon>Streptomyces</taxon>
        <taxon>Streptomyces albidoflavus group</taxon>
    </lineage>
</organism>
<feature type="chain" id="PRO_0000255651" description="DNA integrity scanning protein DisA">
    <location>
        <begin position="1"/>
        <end position="374"/>
    </location>
</feature>
<feature type="domain" description="DAC" evidence="3">
    <location>
        <begin position="20"/>
        <end position="158"/>
    </location>
</feature>
<feature type="binding site" evidence="2">
    <location>
        <position position="87"/>
    </location>
    <ligand>
        <name>ATP</name>
        <dbReference type="ChEBI" id="CHEBI:30616"/>
    </ligand>
</feature>
<feature type="binding site" evidence="2">
    <location>
        <position position="105"/>
    </location>
    <ligand>
        <name>ATP</name>
        <dbReference type="ChEBI" id="CHEBI:30616"/>
    </ligand>
</feature>
<feature type="binding site" evidence="2">
    <location>
        <begin position="118"/>
        <end position="122"/>
    </location>
    <ligand>
        <name>ATP</name>
        <dbReference type="ChEBI" id="CHEBI:30616"/>
    </ligand>
</feature>
<sequence>MAANDRAAAPGKSGGSAGADGLMRASLSAVAPGTSLRDGLERVLRGNTGGLIVLGSDKTVESMCTGGFVLDVEFTATRLRELCKLDGGIVLSSDLSKILRAGVQLLPDPTIPTEETGTRHRTADRVSKQVGFPVVSVSQSMRLIALYVDGQRRVLEDSAAILSRANQALATLERYKLRLDEVAGTLSALEIEDLVTVRDVSAVAQRLEMVRRIATEIAEYVVELGTDGRLLALQLDELIAGVEPERELVVRDYVPEPTAKRSRTVDEALAELDKLSHAELLELSTVARALGYTGSPETLDSAVSPRGFRLLAKVPRLPGAIIDRLVEHFGGLQKLLAASVDDLQTVDGVGEARARSVREGLSRLAESSILERYV</sequence>